<evidence type="ECO:0000255" key="1">
    <source>
        <dbReference type="HAMAP-Rule" id="MF_00527"/>
    </source>
</evidence>
<proteinExistence type="inferred from homology"/>
<reference key="1">
    <citation type="journal article" date="2006" name="DNA Res.">
        <title>Genome sequence of the cat pathogen, Chlamydophila felis.</title>
        <authorList>
            <person name="Azuma Y."/>
            <person name="Hirakawa H."/>
            <person name="Yamashita A."/>
            <person name="Cai Y."/>
            <person name="Rahman M.A."/>
            <person name="Suzuki H."/>
            <person name="Mitaku S."/>
            <person name="Toh H."/>
            <person name="Goto S."/>
            <person name="Murakami T."/>
            <person name="Sugi K."/>
            <person name="Hayashi H."/>
            <person name="Fukushi H."/>
            <person name="Hattori M."/>
            <person name="Kuhara S."/>
            <person name="Shirai M."/>
        </authorList>
    </citation>
    <scope>NUCLEOTIDE SEQUENCE [LARGE SCALE GENOMIC DNA]</scope>
    <source>
        <strain>Fe/C-56</strain>
    </source>
</reference>
<keyword id="KW-0227">DNA damage</keyword>
<keyword id="KW-0234">DNA repair</keyword>
<keyword id="KW-0378">Hydrolase</keyword>
<sequence>MLPESFFLNDDVLYLAKELLGHSLVTQIEGKTTSGIIIETEAYRGPDDKACHAYNYRKTQRNLPMYSRGGIAYIYQCYGMHALFNVVTGSQNLPHAVLIRAIAPQKGEDIMIQRRQWQNKPKHLLTNGPGKVCQALNLTLEHNTQSLTSPQIHISQKKISGTITQTPRIGIDYAEEYRDLPWRFLLNIKKSKKI</sequence>
<comment type="similarity">
    <text evidence="1">Belongs to the DNA glycosylase MPG family.</text>
</comment>
<dbReference type="EC" id="3.2.2.-" evidence="1"/>
<dbReference type="EMBL" id="AP006861">
    <property type="protein sequence ID" value="BAE81539.1"/>
    <property type="molecule type" value="Genomic_DNA"/>
</dbReference>
<dbReference type="RefSeq" id="WP_011458317.1">
    <property type="nucleotide sequence ID" value="NC_007899.1"/>
</dbReference>
<dbReference type="SMR" id="Q253J9"/>
<dbReference type="STRING" id="264202.CF0767"/>
<dbReference type="KEGG" id="cfe:CF0767"/>
<dbReference type="eggNOG" id="COG2094">
    <property type="taxonomic scope" value="Bacteria"/>
</dbReference>
<dbReference type="HOGENOM" id="CLU_060471_2_1_0"/>
<dbReference type="OrthoDB" id="9794313at2"/>
<dbReference type="Proteomes" id="UP000001260">
    <property type="component" value="Chromosome"/>
</dbReference>
<dbReference type="GO" id="GO:0003905">
    <property type="term" value="F:alkylbase DNA N-glycosylase activity"/>
    <property type="evidence" value="ECO:0007669"/>
    <property type="project" value="InterPro"/>
</dbReference>
<dbReference type="GO" id="GO:0003677">
    <property type="term" value="F:DNA binding"/>
    <property type="evidence" value="ECO:0007669"/>
    <property type="project" value="InterPro"/>
</dbReference>
<dbReference type="GO" id="GO:0006284">
    <property type="term" value="P:base-excision repair"/>
    <property type="evidence" value="ECO:0007669"/>
    <property type="project" value="InterPro"/>
</dbReference>
<dbReference type="CDD" id="cd00540">
    <property type="entry name" value="AAG"/>
    <property type="match status" value="1"/>
</dbReference>
<dbReference type="FunFam" id="3.10.300.10:FF:000001">
    <property type="entry name" value="Putative 3-methyladenine DNA glycosylase"/>
    <property type="match status" value="1"/>
</dbReference>
<dbReference type="Gene3D" id="3.10.300.10">
    <property type="entry name" value="Methylpurine-DNA glycosylase (MPG)"/>
    <property type="match status" value="1"/>
</dbReference>
<dbReference type="HAMAP" id="MF_00527">
    <property type="entry name" value="3MGH"/>
    <property type="match status" value="1"/>
</dbReference>
<dbReference type="InterPro" id="IPR011034">
    <property type="entry name" value="Formyl_transferase-like_C_sf"/>
</dbReference>
<dbReference type="InterPro" id="IPR003180">
    <property type="entry name" value="MPG"/>
</dbReference>
<dbReference type="InterPro" id="IPR036995">
    <property type="entry name" value="MPG_sf"/>
</dbReference>
<dbReference type="NCBIfam" id="TIGR00567">
    <property type="entry name" value="3mg"/>
    <property type="match status" value="1"/>
</dbReference>
<dbReference type="PANTHER" id="PTHR10429">
    <property type="entry name" value="DNA-3-METHYLADENINE GLYCOSYLASE"/>
    <property type="match status" value="1"/>
</dbReference>
<dbReference type="PANTHER" id="PTHR10429:SF0">
    <property type="entry name" value="DNA-3-METHYLADENINE GLYCOSYLASE"/>
    <property type="match status" value="1"/>
</dbReference>
<dbReference type="Pfam" id="PF02245">
    <property type="entry name" value="Pur_DNA_glyco"/>
    <property type="match status" value="1"/>
</dbReference>
<dbReference type="SUPFAM" id="SSF50486">
    <property type="entry name" value="FMT C-terminal domain-like"/>
    <property type="match status" value="1"/>
</dbReference>
<feature type="chain" id="PRO_0000265007" description="Putative 3-methyladenine DNA glycosylase">
    <location>
        <begin position="1"/>
        <end position="194"/>
    </location>
</feature>
<organism>
    <name type="scientific">Chlamydia felis (strain Fe/C-56)</name>
    <name type="common">Chlamydophila felis</name>
    <dbReference type="NCBI Taxonomy" id="264202"/>
    <lineage>
        <taxon>Bacteria</taxon>
        <taxon>Pseudomonadati</taxon>
        <taxon>Chlamydiota</taxon>
        <taxon>Chlamydiia</taxon>
        <taxon>Chlamydiales</taxon>
        <taxon>Chlamydiaceae</taxon>
        <taxon>Chlamydia/Chlamydophila group</taxon>
        <taxon>Chlamydia</taxon>
    </lineage>
</organism>
<name>3MGH_CHLFF</name>
<accession>Q253J9</accession>
<protein>
    <recommendedName>
        <fullName evidence="1">Putative 3-methyladenine DNA glycosylase</fullName>
        <ecNumber evidence="1">3.2.2.-</ecNumber>
    </recommendedName>
</protein>
<gene>
    <name type="ordered locus">CF0767</name>
</gene>